<sequence>MGACCSCLGNRGGDGSHTQLLLAENEREAISALLQYLENRSDVDFFSNGPLRALSTLVYSENIDLQRSAALAFAEITEKDVREVNRDVLEPILILLQSADSEVQRAACGALGNLAVNTENKILIVEMGGLEPLIRQMMSTNIEVQCNAVGCITNLATQDDNKSKIAKSGALIPLTKLAKSKDIRVQRNATGALLNMTHSGENRQELVNAGAVPVLVSLLSNEDADVQYYCTTALSNIAVDEVNRKKLASTEPKLVGQLVHLMDSPSPRVQCQATLALRNLASDSGYQVEIVRAGGLPHLVQLLTCNHQPLVLAAVACIRNISIHPLNEALIIEAGFLKPLVGLLDYTDSEEIQCHAVSTLRNLAASSEKNRTALLAAGAVDKCKELVLKVPLTVQSEISACFAILALADDLKPKLYESHIIDVLIPLTFSENGEVCGNSAAALANLCSRVSNEHKQYILNNWAQPNEGIYGFLIRFLESGSPTFEHIALWTILQLLESNNTEINALIKENETILAGIKNLSASQQQIQQSQIGQTTTTTTTNITNNNTNTNTNTNTTTSTSNEDQFEDPKVELFNLTQQILQILG</sequence>
<accession>Q59MN0</accession>
<accession>A0A1D8PMA3</accession>
<feature type="initiator methionine" description="Removed" evidence="1">
    <location>
        <position position="1"/>
    </location>
</feature>
<feature type="chain" id="PRO_0000256208" description="Vacuolar protein 8">
    <location>
        <begin position="2"/>
        <end position="585"/>
    </location>
</feature>
<feature type="repeat" description="ARM 1">
    <location>
        <begin position="39"/>
        <end position="76"/>
    </location>
</feature>
<feature type="repeat" description="ARM 2">
    <location>
        <begin position="77"/>
        <end position="116"/>
    </location>
</feature>
<feature type="repeat" description="ARM 3">
    <location>
        <begin position="118"/>
        <end position="157"/>
    </location>
</feature>
<feature type="repeat" description="ARM 4">
    <location>
        <begin position="159"/>
        <end position="198"/>
    </location>
</feature>
<feature type="repeat" description="ARM 5">
    <location>
        <begin position="200"/>
        <end position="239"/>
    </location>
</feature>
<feature type="repeat" description="ARM 6">
    <location>
        <begin position="243"/>
        <end position="282"/>
    </location>
</feature>
<feature type="repeat" description="ARM 7">
    <location>
        <begin position="284"/>
        <end position="323"/>
    </location>
</feature>
<feature type="repeat" description="ARM 8">
    <location>
        <begin position="325"/>
        <end position="365"/>
    </location>
</feature>
<feature type="repeat" description="ARM 9">
    <location>
        <begin position="409"/>
        <end position="448"/>
    </location>
</feature>
<feature type="region of interest" description="Disordered" evidence="3">
    <location>
        <begin position="531"/>
        <end position="565"/>
    </location>
</feature>
<feature type="compositionally biased region" description="Low complexity" evidence="3">
    <location>
        <begin position="531"/>
        <end position="562"/>
    </location>
</feature>
<feature type="lipid moiety-binding region" description="N-myristoyl glycine" evidence="1">
    <location>
        <position position="2"/>
    </location>
</feature>
<feature type="lipid moiety-binding region" description="S-palmitoyl cysteine" evidence="2">
    <location>
        <position position="4"/>
    </location>
</feature>
<feature type="lipid moiety-binding region" description="S-palmitoyl cysteine" evidence="2">
    <location>
        <position position="5"/>
    </location>
</feature>
<feature type="lipid moiety-binding region" description="S-palmitoyl cysteine" evidence="2">
    <location>
        <position position="7"/>
    </location>
</feature>
<protein>
    <recommendedName>
        <fullName>Vacuolar protein 8</fullName>
    </recommendedName>
</protein>
<dbReference type="EMBL" id="CP017626">
    <property type="protein sequence ID" value="AOW29255.1"/>
    <property type="molecule type" value="Genomic_DNA"/>
</dbReference>
<dbReference type="RefSeq" id="XP_710992.1">
    <property type="nucleotide sequence ID" value="XM_705900.1"/>
</dbReference>
<dbReference type="SMR" id="Q59MN0"/>
<dbReference type="FunCoup" id="Q59MN0">
    <property type="interactions" value="140"/>
</dbReference>
<dbReference type="STRING" id="237561.Q59MN0"/>
<dbReference type="EnsemblFungi" id="C4_05150W_A-T">
    <property type="protein sequence ID" value="C4_05150W_A-T-p1"/>
    <property type="gene ID" value="C4_05150W_A"/>
</dbReference>
<dbReference type="GeneID" id="3647410"/>
<dbReference type="KEGG" id="cal:CAALFM_C405150WA"/>
<dbReference type="CGD" id="CAL0000185656">
    <property type="gene designation" value="VAC8"/>
</dbReference>
<dbReference type="VEuPathDB" id="FungiDB:C4_05150W_A"/>
<dbReference type="eggNOG" id="KOG4224">
    <property type="taxonomic scope" value="Eukaryota"/>
</dbReference>
<dbReference type="HOGENOM" id="CLU_021483_0_0_1"/>
<dbReference type="InParanoid" id="Q59MN0"/>
<dbReference type="OMA" id="VWDKPDG"/>
<dbReference type="OrthoDB" id="7537227at2759"/>
<dbReference type="PRO" id="PR:Q59MN0"/>
<dbReference type="Proteomes" id="UP000000559">
    <property type="component" value="Chromosome 4"/>
</dbReference>
<dbReference type="GO" id="GO:1903561">
    <property type="term" value="C:extracellular vesicle"/>
    <property type="evidence" value="ECO:0000314"/>
    <property type="project" value="CGD"/>
</dbReference>
<dbReference type="GO" id="GO:0000324">
    <property type="term" value="C:fungal-type vacuole"/>
    <property type="evidence" value="ECO:0000250"/>
    <property type="project" value="CGD"/>
</dbReference>
<dbReference type="GO" id="GO:0000329">
    <property type="term" value="C:fungal-type vacuole membrane"/>
    <property type="evidence" value="ECO:0000318"/>
    <property type="project" value="GO_Central"/>
</dbReference>
<dbReference type="GO" id="GO:0045121">
    <property type="term" value="C:membrane raft"/>
    <property type="evidence" value="ECO:0007669"/>
    <property type="project" value="EnsemblFungi"/>
</dbReference>
<dbReference type="GO" id="GO:0071563">
    <property type="term" value="C:Myo2p-Vac17p-Vac8p transport complex"/>
    <property type="evidence" value="ECO:0007669"/>
    <property type="project" value="EnsemblFungi"/>
</dbReference>
<dbReference type="GO" id="GO:0031965">
    <property type="term" value="C:nuclear membrane"/>
    <property type="evidence" value="ECO:0007669"/>
    <property type="project" value="EnsemblFungi"/>
</dbReference>
<dbReference type="GO" id="GO:0071561">
    <property type="term" value="C:nucleus-vacuole junction"/>
    <property type="evidence" value="ECO:0007669"/>
    <property type="project" value="EnsemblFungi"/>
</dbReference>
<dbReference type="GO" id="GO:0000407">
    <property type="term" value="C:phagophore assembly site"/>
    <property type="evidence" value="ECO:0007669"/>
    <property type="project" value="EnsemblFungi"/>
</dbReference>
<dbReference type="GO" id="GO:0042802">
    <property type="term" value="F:identical protein binding"/>
    <property type="evidence" value="ECO:0007669"/>
    <property type="project" value="EnsemblFungi"/>
</dbReference>
<dbReference type="GO" id="GO:0043495">
    <property type="term" value="F:protein-membrane adaptor activity"/>
    <property type="evidence" value="ECO:0000318"/>
    <property type="project" value="GO_Central"/>
</dbReference>
<dbReference type="GO" id="GO:0000045">
    <property type="term" value="P:autophagosome assembly"/>
    <property type="evidence" value="ECO:0000318"/>
    <property type="project" value="GO_Central"/>
</dbReference>
<dbReference type="GO" id="GO:0071255">
    <property type="term" value="P:Cvt vesicle assembly"/>
    <property type="evidence" value="ECO:0007669"/>
    <property type="project" value="EnsemblFungi"/>
</dbReference>
<dbReference type="GO" id="GO:0051656">
    <property type="term" value="P:establishment of organelle localization"/>
    <property type="evidence" value="ECO:0007669"/>
    <property type="project" value="EnsemblFungi"/>
</dbReference>
<dbReference type="GO" id="GO:0030447">
    <property type="term" value="P:filamentous growth"/>
    <property type="evidence" value="ECO:0000315"/>
    <property type="project" value="CGD"/>
</dbReference>
<dbReference type="GO" id="GO:0036180">
    <property type="term" value="P:filamentous growth of a population of unicellular organisms in response to biotic stimulus"/>
    <property type="evidence" value="ECO:0000315"/>
    <property type="project" value="CGD"/>
</dbReference>
<dbReference type="GO" id="GO:0030448">
    <property type="term" value="P:hyphal growth"/>
    <property type="evidence" value="ECO:0000315"/>
    <property type="project" value="CGD"/>
</dbReference>
<dbReference type="GO" id="GO:0071562">
    <property type="term" value="P:nucleus-vacuole junction assembly"/>
    <property type="evidence" value="ECO:0000318"/>
    <property type="project" value="GO_Central"/>
</dbReference>
<dbReference type="GO" id="GO:0000425">
    <property type="term" value="P:pexophagy"/>
    <property type="evidence" value="ECO:0007669"/>
    <property type="project" value="EnsemblFungi"/>
</dbReference>
<dbReference type="GO" id="GO:0034727">
    <property type="term" value="P:piecemeal microautophagy of the nucleus"/>
    <property type="evidence" value="ECO:0007669"/>
    <property type="project" value="EnsemblFungi"/>
</dbReference>
<dbReference type="GO" id="GO:1903044">
    <property type="term" value="P:protein localization to membrane raft"/>
    <property type="evidence" value="ECO:0007669"/>
    <property type="project" value="EnsemblFungi"/>
</dbReference>
<dbReference type="GO" id="GO:0034497">
    <property type="term" value="P:protein localization to phagophore assembly site"/>
    <property type="evidence" value="ECO:0007669"/>
    <property type="project" value="EnsemblFungi"/>
</dbReference>
<dbReference type="GO" id="GO:0031503">
    <property type="term" value="P:protein-containing complex localization"/>
    <property type="evidence" value="ECO:0007669"/>
    <property type="project" value="EnsemblFungi"/>
</dbReference>
<dbReference type="GO" id="GO:0034517">
    <property type="term" value="P:ribophagy"/>
    <property type="evidence" value="ECO:0007669"/>
    <property type="project" value="EnsemblFungi"/>
</dbReference>
<dbReference type="GO" id="GO:0042144">
    <property type="term" value="P:vacuole fusion, non-autophagic"/>
    <property type="evidence" value="ECO:0007669"/>
    <property type="project" value="EnsemblFungi"/>
</dbReference>
<dbReference type="GO" id="GO:0000011">
    <property type="term" value="P:vacuole inheritance"/>
    <property type="evidence" value="ECO:0000315"/>
    <property type="project" value="CGD"/>
</dbReference>
<dbReference type="FunFam" id="1.25.10.10:FF:000470">
    <property type="entry name" value="Vacuolar protein 8"/>
    <property type="match status" value="1"/>
</dbReference>
<dbReference type="Gene3D" id="1.25.10.10">
    <property type="entry name" value="Leucine-rich Repeat Variant"/>
    <property type="match status" value="2"/>
</dbReference>
<dbReference type="InterPro" id="IPR011989">
    <property type="entry name" value="ARM-like"/>
</dbReference>
<dbReference type="InterPro" id="IPR016024">
    <property type="entry name" value="ARM-type_fold"/>
</dbReference>
<dbReference type="InterPro" id="IPR000225">
    <property type="entry name" value="Armadillo"/>
</dbReference>
<dbReference type="InterPro" id="IPR045156">
    <property type="entry name" value="Vac8"/>
</dbReference>
<dbReference type="PANTHER" id="PTHR47249">
    <property type="entry name" value="VACUOLAR PROTEIN 8"/>
    <property type="match status" value="1"/>
</dbReference>
<dbReference type="PANTHER" id="PTHR47249:SF1">
    <property type="entry name" value="VACUOLAR PROTEIN 8"/>
    <property type="match status" value="1"/>
</dbReference>
<dbReference type="Pfam" id="PF00514">
    <property type="entry name" value="Arm"/>
    <property type="match status" value="7"/>
</dbReference>
<dbReference type="SMART" id="SM00185">
    <property type="entry name" value="ARM"/>
    <property type="match status" value="9"/>
</dbReference>
<dbReference type="SUPFAM" id="SSF48371">
    <property type="entry name" value="ARM repeat"/>
    <property type="match status" value="2"/>
</dbReference>
<dbReference type="PROSITE" id="PS50176">
    <property type="entry name" value="ARM_REPEAT"/>
    <property type="match status" value="7"/>
</dbReference>
<organism>
    <name type="scientific">Candida albicans (strain SC5314 / ATCC MYA-2876)</name>
    <name type="common">Yeast</name>
    <dbReference type="NCBI Taxonomy" id="237561"/>
    <lineage>
        <taxon>Eukaryota</taxon>
        <taxon>Fungi</taxon>
        <taxon>Dikarya</taxon>
        <taxon>Ascomycota</taxon>
        <taxon>Saccharomycotina</taxon>
        <taxon>Pichiomycetes</taxon>
        <taxon>Debaryomycetaceae</taxon>
        <taxon>Candida/Lodderomyces clade</taxon>
        <taxon>Candida</taxon>
    </lineage>
</organism>
<comment type="function">
    <text evidence="4">Functions in both vacuole inheritance and protein targeting from the cytoplasm to vacuole. Vacuole inheritance has a role in the regulation of hyphal cell division.</text>
</comment>
<comment type="subcellular location">
    <subcellularLocation>
        <location evidence="1">Vacuole membrane</location>
        <topology evidence="1">Lipid-anchor</topology>
    </subcellularLocation>
</comment>
<comment type="similarity">
    <text evidence="5">Belongs to the beta-catenin family.</text>
</comment>
<evidence type="ECO:0000250" key="1"/>
<evidence type="ECO:0000255" key="2"/>
<evidence type="ECO:0000256" key="3">
    <source>
        <dbReference type="SAM" id="MobiDB-lite"/>
    </source>
</evidence>
<evidence type="ECO:0000269" key="4">
    <source>
    </source>
</evidence>
<evidence type="ECO:0000305" key="5"/>
<name>VAC8_CANAL</name>
<reference key="1">
    <citation type="journal article" date="2006" name="Eukaryot. Cell">
        <title>Candida albicans VAC8 is required for vacuolar inheritance and normal hyphal branching.</title>
        <authorList>
            <person name="Barelle C.J."/>
            <person name="Richard M.L."/>
            <person name="Gaillardin C."/>
            <person name="Gow N.A.R."/>
            <person name="Brown A.J.P."/>
        </authorList>
    </citation>
    <scope>NUCLEOTIDE SEQUENCE [GENOMIC DNA]</scope>
    <scope>FUNCTION</scope>
</reference>
<reference key="2">
    <citation type="journal article" date="2004" name="Proc. Natl. Acad. Sci. U.S.A.">
        <title>The diploid genome sequence of Candida albicans.</title>
        <authorList>
            <person name="Jones T."/>
            <person name="Federspiel N.A."/>
            <person name="Chibana H."/>
            <person name="Dungan J."/>
            <person name="Kalman S."/>
            <person name="Magee B.B."/>
            <person name="Newport G."/>
            <person name="Thorstenson Y.R."/>
            <person name="Agabian N."/>
            <person name="Magee P.T."/>
            <person name="Davis R.W."/>
            <person name="Scherer S."/>
        </authorList>
    </citation>
    <scope>NUCLEOTIDE SEQUENCE [LARGE SCALE GENOMIC DNA]</scope>
    <source>
        <strain>SC5314 / ATCC MYA-2876</strain>
    </source>
</reference>
<reference key="3">
    <citation type="journal article" date="2007" name="Genome Biol.">
        <title>Assembly of the Candida albicans genome into sixteen supercontigs aligned on the eight chromosomes.</title>
        <authorList>
            <person name="van het Hoog M."/>
            <person name="Rast T.J."/>
            <person name="Martchenko M."/>
            <person name="Grindle S."/>
            <person name="Dignard D."/>
            <person name="Hogues H."/>
            <person name="Cuomo C."/>
            <person name="Berriman M."/>
            <person name="Scherer S."/>
            <person name="Magee B.B."/>
            <person name="Whiteway M."/>
            <person name="Chibana H."/>
            <person name="Nantel A."/>
            <person name="Magee P.T."/>
        </authorList>
    </citation>
    <scope>GENOME REANNOTATION</scope>
    <source>
        <strain>SC5314 / ATCC MYA-2876</strain>
    </source>
</reference>
<reference key="4">
    <citation type="journal article" date="2013" name="Genome Biol.">
        <title>Assembly of a phased diploid Candida albicans genome facilitates allele-specific measurements and provides a simple model for repeat and indel structure.</title>
        <authorList>
            <person name="Muzzey D."/>
            <person name="Schwartz K."/>
            <person name="Weissman J.S."/>
            <person name="Sherlock G."/>
        </authorList>
    </citation>
    <scope>NUCLEOTIDE SEQUENCE [LARGE SCALE GENOMIC DNA]</scope>
    <scope>GENOME REANNOTATION</scope>
    <source>
        <strain>SC5314 / ATCC MYA-2876</strain>
    </source>
</reference>
<keyword id="KW-0449">Lipoprotein</keyword>
<keyword id="KW-0472">Membrane</keyword>
<keyword id="KW-0519">Myristate</keyword>
<keyword id="KW-0564">Palmitate</keyword>
<keyword id="KW-1185">Reference proteome</keyword>
<keyword id="KW-0677">Repeat</keyword>
<keyword id="KW-0926">Vacuole</keyword>
<proteinExistence type="inferred from homology"/>
<gene>
    <name type="primary">VAC8</name>
    <name type="ordered locus">CAALFM_C405150WA</name>
    <name type="ORF">CaO19.745</name>
    <name type="ORF">CaO19.8364</name>
</gene>